<feature type="chain" id="PRO_0000351019" description="ATP-dependent DNA helicase CHL1">
    <location>
        <begin position="1"/>
        <end position="803"/>
    </location>
</feature>
<feature type="domain" description="Helicase ATP-binding" evidence="4">
    <location>
        <begin position="5"/>
        <end position="388"/>
    </location>
</feature>
<feature type="short sequence motif" description="DEAH box">
    <location>
        <begin position="330"/>
        <end position="333"/>
    </location>
</feature>
<feature type="binding site" evidence="4">
    <location>
        <begin position="40"/>
        <end position="47"/>
    </location>
    <ligand>
        <name>ATP</name>
        <dbReference type="ChEBI" id="CHEBI:30616"/>
    </ligand>
</feature>
<feature type="binding site" evidence="1">
    <location>
        <position position="216"/>
    </location>
    <ligand>
        <name>[4Fe-4S] cluster</name>
        <dbReference type="ChEBI" id="CHEBI:49883"/>
    </ligand>
</feature>
<feature type="binding site" evidence="1">
    <location>
        <position position="234"/>
    </location>
    <ligand>
        <name>[4Fe-4S] cluster</name>
        <dbReference type="ChEBI" id="CHEBI:49883"/>
    </ligand>
</feature>
<feature type="binding site" evidence="1">
    <location>
        <position position="245"/>
    </location>
    <ligand>
        <name>[4Fe-4S] cluster</name>
        <dbReference type="ChEBI" id="CHEBI:49883"/>
    </ligand>
</feature>
<feature type="binding site" evidence="1">
    <location>
        <position position="287"/>
    </location>
    <ligand>
        <name>[4Fe-4S] cluster</name>
        <dbReference type="ChEBI" id="CHEBI:49883"/>
    </ligand>
</feature>
<reference key="1">
    <citation type="journal article" date="2004" name="Nature">
        <title>Genome evolution in yeasts.</title>
        <authorList>
            <person name="Dujon B."/>
            <person name="Sherman D."/>
            <person name="Fischer G."/>
            <person name="Durrens P."/>
            <person name="Casaregola S."/>
            <person name="Lafontaine I."/>
            <person name="de Montigny J."/>
            <person name="Marck C."/>
            <person name="Neuveglise C."/>
            <person name="Talla E."/>
            <person name="Goffard N."/>
            <person name="Frangeul L."/>
            <person name="Aigle M."/>
            <person name="Anthouard V."/>
            <person name="Babour A."/>
            <person name="Barbe V."/>
            <person name="Barnay S."/>
            <person name="Blanchin S."/>
            <person name="Beckerich J.-M."/>
            <person name="Beyne E."/>
            <person name="Bleykasten C."/>
            <person name="Boisrame A."/>
            <person name="Boyer J."/>
            <person name="Cattolico L."/>
            <person name="Confanioleri F."/>
            <person name="de Daruvar A."/>
            <person name="Despons L."/>
            <person name="Fabre E."/>
            <person name="Fairhead C."/>
            <person name="Ferry-Dumazet H."/>
            <person name="Groppi A."/>
            <person name="Hantraye F."/>
            <person name="Hennequin C."/>
            <person name="Jauniaux N."/>
            <person name="Joyet P."/>
            <person name="Kachouri R."/>
            <person name="Kerrest A."/>
            <person name="Koszul R."/>
            <person name="Lemaire M."/>
            <person name="Lesur I."/>
            <person name="Ma L."/>
            <person name="Muller H."/>
            <person name="Nicaud J.-M."/>
            <person name="Nikolski M."/>
            <person name="Oztas S."/>
            <person name="Ozier-Kalogeropoulos O."/>
            <person name="Pellenz S."/>
            <person name="Potier S."/>
            <person name="Richard G.-F."/>
            <person name="Straub M.-L."/>
            <person name="Suleau A."/>
            <person name="Swennen D."/>
            <person name="Tekaia F."/>
            <person name="Wesolowski-Louvel M."/>
            <person name="Westhof E."/>
            <person name="Wirth B."/>
            <person name="Zeniou-Meyer M."/>
            <person name="Zivanovic Y."/>
            <person name="Bolotin-Fukuhara M."/>
            <person name="Thierry A."/>
            <person name="Bouchier C."/>
            <person name="Caudron B."/>
            <person name="Scarpelli C."/>
            <person name="Gaillardin C."/>
            <person name="Weissenbach J."/>
            <person name="Wincker P."/>
            <person name="Souciet J.-L."/>
        </authorList>
    </citation>
    <scope>NUCLEOTIDE SEQUENCE [LARGE SCALE GENOMIC DNA]</scope>
    <source>
        <strain>CLIB 122 / E 150</strain>
    </source>
</reference>
<name>CHL1_YARLI</name>
<dbReference type="EC" id="5.6.2.3" evidence="3"/>
<dbReference type="EMBL" id="CR382129">
    <property type="protein sequence ID" value="CAG82511.1"/>
    <property type="molecule type" value="Genomic_DNA"/>
</dbReference>
<dbReference type="RefSeq" id="XP_502189.1">
    <property type="nucleotide sequence ID" value="XM_502189.1"/>
</dbReference>
<dbReference type="SMR" id="Q6CAX3"/>
<dbReference type="FunCoup" id="Q6CAX3">
    <property type="interactions" value="1009"/>
</dbReference>
<dbReference type="STRING" id="284591.Q6CAX3"/>
<dbReference type="EnsemblFungi" id="CAG82511">
    <property type="protein sequence ID" value="CAG82511"/>
    <property type="gene ID" value="YALI0_C23639g"/>
</dbReference>
<dbReference type="KEGG" id="yli:2909620"/>
<dbReference type="VEuPathDB" id="FungiDB:YALI0_C23639g"/>
<dbReference type="HOGENOM" id="CLU_006515_2_0_1"/>
<dbReference type="InParanoid" id="Q6CAX3"/>
<dbReference type="OMA" id="QTHQFRD"/>
<dbReference type="OrthoDB" id="88977at4891"/>
<dbReference type="Proteomes" id="UP000001300">
    <property type="component" value="Chromosome C"/>
</dbReference>
<dbReference type="GO" id="GO:0000785">
    <property type="term" value="C:chromatin"/>
    <property type="evidence" value="ECO:0007669"/>
    <property type="project" value="EnsemblFungi"/>
</dbReference>
<dbReference type="GO" id="GO:0005634">
    <property type="term" value="C:nucleus"/>
    <property type="evidence" value="ECO:0000318"/>
    <property type="project" value="GO_Central"/>
</dbReference>
<dbReference type="GO" id="GO:0005524">
    <property type="term" value="F:ATP binding"/>
    <property type="evidence" value="ECO:0007669"/>
    <property type="project" value="UniProtKB-KW"/>
</dbReference>
<dbReference type="GO" id="GO:0016887">
    <property type="term" value="F:ATP hydrolysis activity"/>
    <property type="evidence" value="ECO:0007669"/>
    <property type="project" value="RHEA"/>
</dbReference>
<dbReference type="GO" id="GO:0003677">
    <property type="term" value="F:DNA binding"/>
    <property type="evidence" value="ECO:0007669"/>
    <property type="project" value="UniProtKB-KW"/>
</dbReference>
<dbReference type="GO" id="GO:0003678">
    <property type="term" value="F:DNA helicase activity"/>
    <property type="evidence" value="ECO:0000318"/>
    <property type="project" value="GO_Central"/>
</dbReference>
<dbReference type="GO" id="GO:0051536">
    <property type="term" value="F:iron-sulfur cluster binding"/>
    <property type="evidence" value="ECO:0007669"/>
    <property type="project" value="UniProtKB-KW"/>
</dbReference>
<dbReference type="GO" id="GO:0046872">
    <property type="term" value="F:metal ion binding"/>
    <property type="evidence" value="ECO:0007669"/>
    <property type="project" value="UniProtKB-KW"/>
</dbReference>
<dbReference type="GO" id="GO:0034085">
    <property type="term" value="P:establishment of sister chromatid cohesion"/>
    <property type="evidence" value="ECO:0000318"/>
    <property type="project" value="GO_Central"/>
</dbReference>
<dbReference type="GO" id="GO:0036297">
    <property type="term" value="P:interstrand cross-link repair"/>
    <property type="evidence" value="ECO:0007669"/>
    <property type="project" value="EnsemblFungi"/>
</dbReference>
<dbReference type="GO" id="GO:0031571">
    <property type="term" value="P:mitotic G1 DNA damage checkpoint signaling"/>
    <property type="evidence" value="ECO:0007669"/>
    <property type="project" value="EnsemblFungi"/>
</dbReference>
<dbReference type="GO" id="GO:0007064">
    <property type="term" value="P:mitotic sister chromatid cohesion"/>
    <property type="evidence" value="ECO:0007669"/>
    <property type="project" value="EnsemblFungi"/>
</dbReference>
<dbReference type="CDD" id="cd18788">
    <property type="entry name" value="SF2_C_XPD"/>
    <property type="match status" value="1"/>
</dbReference>
<dbReference type="FunFam" id="3.40.50.300:FF:001968">
    <property type="entry name" value="ATP-dependent DNA helicase CHL1"/>
    <property type="match status" value="1"/>
</dbReference>
<dbReference type="FunFam" id="3.40.50.300:FF:003707">
    <property type="entry name" value="ATP-dependent DNA helicase CHL1"/>
    <property type="match status" value="1"/>
</dbReference>
<dbReference type="FunFam" id="3.40.50.300:FF:001372">
    <property type="entry name" value="ATP-dependent DNA helicase chl1"/>
    <property type="match status" value="1"/>
</dbReference>
<dbReference type="Gene3D" id="3.40.50.300">
    <property type="entry name" value="P-loop containing nucleotide triphosphate hydrolases"/>
    <property type="match status" value="3"/>
</dbReference>
<dbReference type="InterPro" id="IPR006555">
    <property type="entry name" value="ATP-dep_Helicase_C"/>
</dbReference>
<dbReference type="InterPro" id="IPR045028">
    <property type="entry name" value="DinG/Rad3-like"/>
</dbReference>
<dbReference type="InterPro" id="IPR002464">
    <property type="entry name" value="DNA/RNA_helicase_DEAH_CS"/>
</dbReference>
<dbReference type="InterPro" id="IPR014013">
    <property type="entry name" value="Helic_SF1/SF2_ATP-bd_DinG/Rad3"/>
</dbReference>
<dbReference type="InterPro" id="IPR006554">
    <property type="entry name" value="Helicase-like_DEXD_c2"/>
</dbReference>
<dbReference type="InterPro" id="IPR027417">
    <property type="entry name" value="P-loop_NTPase"/>
</dbReference>
<dbReference type="InterPro" id="IPR010614">
    <property type="entry name" value="RAD3-like_helicase_DEAD"/>
</dbReference>
<dbReference type="InterPro" id="IPR013020">
    <property type="entry name" value="Rad3/Chl1-like"/>
</dbReference>
<dbReference type="NCBIfam" id="TIGR00604">
    <property type="entry name" value="rad3"/>
    <property type="match status" value="1"/>
</dbReference>
<dbReference type="PANTHER" id="PTHR11472:SF41">
    <property type="entry name" value="ATP-DEPENDENT DNA HELICASE DDX11-RELATED"/>
    <property type="match status" value="1"/>
</dbReference>
<dbReference type="PANTHER" id="PTHR11472">
    <property type="entry name" value="DNA REPAIR DEAD HELICASE RAD3/XP-D SUBFAMILY MEMBER"/>
    <property type="match status" value="1"/>
</dbReference>
<dbReference type="Pfam" id="PF06733">
    <property type="entry name" value="DEAD_2"/>
    <property type="match status" value="1"/>
</dbReference>
<dbReference type="Pfam" id="PF13307">
    <property type="entry name" value="Helicase_C_2"/>
    <property type="match status" value="1"/>
</dbReference>
<dbReference type="SMART" id="SM00488">
    <property type="entry name" value="DEXDc2"/>
    <property type="match status" value="1"/>
</dbReference>
<dbReference type="SMART" id="SM00491">
    <property type="entry name" value="HELICc2"/>
    <property type="match status" value="1"/>
</dbReference>
<dbReference type="SUPFAM" id="SSF52540">
    <property type="entry name" value="P-loop containing nucleoside triphosphate hydrolases"/>
    <property type="match status" value="2"/>
</dbReference>
<dbReference type="PROSITE" id="PS00690">
    <property type="entry name" value="DEAH_ATP_HELICASE"/>
    <property type="match status" value="1"/>
</dbReference>
<dbReference type="PROSITE" id="PS51193">
    <property type="entry name" value="HELICASE_ATP_BIND_2"/>
    <property type="match status" value="1"/>
</dbReference>
<organism>
    <name type="scientific">Yarrowia lipolytica (strain CLIB 122 / E 150)</name>
    <name type="common">Yeast</name>
    <name type="synonym">Candida lipolytica</name>
    <dbReference type="NCBI Taxonomy" id="284591"/>
    <lineage>
        <taxon>Eukaryota</taxon>
        <taxon>Fungi</taxon>
        <taxon>Dikarya</taxon>
        <taxon>Ascomycota</taxon>
        <taxon>Saccharomycotina</taxon>
        <taxon>Dipodascomycetes</taxon>
        <taxon>Dipodascales</taxon>
        <taxon>Dipodascales incertae sedis</taxon>
        <taxon>Yarrowia</taxon>
    </lineage>
</organism>
<keyword id="KW-0067">ATP-binding</keyword>
<keyword id="KW-0131">Cell cycle</keyword>
<keyword id="KW-0238">DNA-binding</keyword>
<keyword id="KW-0347">Helicase</keyword>
<keyword id="KW-0378">Hydrolase</keyword>
<keyword id="KW-0408">Iron</keyword>
<keyword id="KW-0411">Iron-sulfur</keyword>
<keyword id="KW-0413">Isomerase</keyword>
<keyword id="KW-0479">Metal-binding</keyword>
<keyword id="KW-0547">Nucleotide-binding</keyword>
<keyword id="KW-0539">Nucleus</keyword>
<keyword id="KW-1185">Reference proteome</keyword>
<protein>
    <recommendedName>
        <fullName evidence="2">ATP-dependent DNA helicase CHL1</fullName>
        <ecNumber evidence="3">5.6.2.3</ecNumber>
    </recommendedName>
    <alternativeName>
        <fullName evidence="2">Chromosome loss protein 1</fullName>
    </alternativeName>
    <alternativeName>
        <fullName evidence="5">DNA 5'-3' helicase CHL1</fullName>
    </alternativeName>
</protein>
<sequence length="803" mass="90691">MENTKRREFSHPYTPYPIQVDFMEALYDCIESYKVGIFESPTGTGKTLSLICGSMTWLRKNKAQLAVSTASADENEPAWVLEQTIQLAREEFSRNREMLQKRLDKMRRKNMRARISYEQGFKRAKKAPEPVDDSQFLPEDYSEVIKPEVQRLLSALAPPVENDFQEPVKIIFASRTHSQLSQFVGQMQHTTFPPSSDLQDLESTKLISLGSRKQLCINPRVSHMNSVQAMNDACRDLREGKKGGCKYYKNPHDALGKVDINTFRDTTLAEILDIEDLYKLGKHTSTCPYYASRASIPASEVITVPYQILLSRSARKAIDLPVKNSIVIIDEAHNLLDTITSLHTMSITKSQVSSASSGLQKYQHKFQNRLNSGNRVNLGYLVNMLQALEVFFEKAQKFHKKETAPGTPVTTSSLFDGSTADLINVNRLEKYIDESKIVFKIESYLEHVNGETQEKSHSSSLVLSSVMEFLRQVNNPDSEGVLCFDGPTKLKYQLLDPSEPFKDIVENARCVVLAGGTMEPTGDYLEYLLPYLSQDQIKLFSCGHVIPPQNLSVQVIPNGPNYSFNFTFDKRNDEKMILDVAITLLVYSKIIPEGMVVFFPSYKYLEQVVAVWKKAKKDGKNIYEILNDQKRIFVESQHDSVEKTLSEYAEEVPKGAILLSVVGGKMSEGINFSDGLARAVFMIGLPFPNLMSAEIIAKRKYIEQSVSEKMKAKGVSAKEALEASKGAARDFYMNICLRAVNQSVGRAIRHANDYACIFLLDGRFGKPEIQKKLSKWMREGIREGSFKEALGEVQQFFASHEKN</sequence>
<gene>
    <name type="primary">CHL1</name>
    <name type="ordered locus">YALI0C23639g</name>
</gene>
<accession>Q6CAX3</accession>
<comment type="function">
    <text evidence="2">ATP-dependent DNA helicase important for chromosome transmission and normal cell cycle progression in G(2)/M (By similarity). May have a role in changing DNA topology to allow the loading of proteins involved in maintaining sister chromatid cohesion in the vicinity of the centromeres (By similarity). Has a specific role in chromosome segregation during meiosis II (By similarity).</text>
</comment>
<comment type="catalytic activity">
    <reaction evidence="3">
        <text>Couples ATP hydrolysis with the unwinding of duplex DNA at the replication fork by translocating in the 5'-3' direction. This creates two antiparallel DNA single strands (ssDNA). The leading ssDNA polymer is the template for DNA polymerase III holoenzyme which synthesizes a continuous strand.</text>
        <dbReference type="EC" id="5.6.2.3"/>
    </reaction>
</comment>
<comment type="catalytic activity">
    <reaction evidence="3">
        <text>ATP + H2O = ADP + phosphate + H(+)</text>
        <dbReference type="Rhea" id="RHEA:13065"/>
        <dbReference type="ChEBI" id="CHEBI:15377"/>
        <dbReference type="ChEBI" id="CHEBI:15378"/>
        <dbReference type="ChEBI" id="CHEBI:30616"/>
        <dbReference type="ChEBI" id="CHEBI:43474"/>
        <dbReference type="ChEBI" id="CHEBI:456216"/>
        <dbReference type="EC" id="5.6.2.3"/>
    </reaction>
</comment>
<comment type="cofactor">
    <cofactor evidence="1">
        <name>[4Fe-4S] cluster</name>
        <dbReference type="ChEBI" id="CHEBI:49883"/>
    </cofactor>
    <text evidence="1">Binds 1 [4Fe-4S] cluster.</text>
</comment>
<comment type="subcellular location">
    <subcellularLocation>
        <location evidence="2">Nucleus</location>
    </subcellularLocation>
</comment>
<comment type="similarity">
    <text evidence="5">Belongs to the DEAD box helicase family. DEAH subfamily. DDX11/CHL1 sub-subfamily.</text>
</comment>
<proteinExistence type="inferred from homology"/>
<evidence type="ECO:0000250" key="1">
    <source>
        <dbReference type="UniProtKB" id="P18074"/>
    </source>
</evidence>
<evidence type="ECO:0000250" key="2">
    <source>
        <dbReference type="UniProtKB" id="P22516"/>
    </source>
</evidence>
<evidence type="ECO:0000250" key="3">
    <source>
        <dbReference type="UniProtKB" id="Q96FC9"/>
    </source>
</evidence>
<evidence type="ECO:0000255" key="4">
    <source>
        <dbReference type="PROSITE-ProRule" id="PRU00541"/>
    </source>
</evidence>
<evidence type="ECO:0000305" key="5"/>